<proteinExistence type="evidence at transcript level"/>
<name>CASL1_CANSA</name>
<dbReference type="EMBL" id="AB292683">
    <property type="protein sequence ID" value="BAF65034.1"/>
    <property type="molecule type" value="mRNA"/>
</dbReference>
<dbReference type="SMR" id="A6P6W0"/>
<dbReference type="GlyCosmos" id="A6P6W0">
    <property type="glycosylation" value="10 sites, No reported glycans"/>
</dbReference>
<dbReference type="Proteomes" id="UP000596661">
    <property type="component" value="Unplaced"/>
</dbReference>
<dbReference type="GO" id="GO:0005576">
    <property type="term" value="C:extracellular region"/>
    <property type="evidence" value="ECO:0007669"/>
    <property type="project" value="UniProtKB-SubCell"/>
</dbReference>
<dbReference type="GO" id="GO:0071949">
    <property type="term" value="F:FAD binding"/>
    <property type="evidence" value="ECO:0007669"/>
    <property type="project" value="InterPro"/>
</dbReference>
<dbReference type="GO" id="GO:0016491">
    <property type="term" value="F:oxidoreductase activity"/>
    <property type="evidence" value="ECO:0007669"/>
    <property type="project" value="InterPro"/>
</dbReference>
<dbReference type="FunFam" id="3.30.43.10:FF:000004">
    <property type="entry name" value="Berberine bridge enzyme-like 15"/>
    <property type="match status" value="1"/>
</dbReference>
<dbReference type="Gene3D" id="3.30.465.10">
    <property type="match status" value="1"/>
</dbReference>
<dbReference type="Gene3D" id="3.40.462.20">
    <property type="match status" value="1"/>
</dbReference>
<dbReference type="Gene3D" id="3.30.43.10">
    <property type="entry name" value="Uridine Diphospho-n-acetylenolpyruvylglucosamine Reductase, domain 2"/>
    <property type="match status" value="1"/>
</dbReference>
<dbReference type="InterPro" id="IPR012951">
    <property type="entry name" value="BBE"/>
</dbReference>
<dbReference type="InterPro" id="IPR016166">
    <property type="entry name" value="FAD-bd_PCMH"/>
</dbReference>
<dbReference type="InterPro" id="IPR036318">
    <property type="entry name" value="FAD-bd_PCMH-like_sf"/>
</dbReference>
<dbReference type="InterPro" id="IPR016167">
    <property type="entry name" value="FAD-bd_PCMH_sub1"/>
</dbReference>
<dbReference type="InterPro" id="IPR016169">
    <property type="entry name" value="FAD-bd_PCMH_sub2"/>
</dbReference>
<dbReference type="InterPro" id="IPR006094">
    <property type="entry name" value="Oxid_FAD_bind_N"/>
</dbReference>
<dbReference type="PANTHER" id="PTHR32448">
    <property type="entry name" value="OS08G0158400 PROTEIN"/>
    <property type="match status" value="1"/>
</dbReference>
<dbReference type="Pfam" id="PF08031">
    <property type="entry name" value="BBE"/>
    <property type="match status" value="1"/>
</dbReference>
<dbReference type="Pfam" id="PF01565">
    <property type="entry name" value="FAD_binding_4"/>
    <property type="match status" value="1"/>
</dbReference>
<dbReference type="SUPFAM" id="SSF56176">
    <property type="entry name" value="FAD-binding/transporter-associated domain-like"/>
    <property type="match status" value="1"/>
</dbReference>
<dbReference type="PROSITE" id="PS51387">
    <property type="entry name" value="FAD_PCMH"/>
    <property type="match status" value="1"/>
</dbReference>
<evidence type="ECO:0000250" key="1"/>
<evidence type="ECO:0000250" key="2">
    <source>
        <dbReference type="UniProtKB" id="Q8GTB6"/>
    </source>
</evidence>
<evidence type="ECO:0000255" key="3"/>
<evidence type="ECO:0000255" key="4">
    <source>
        <dbReference type="PROSITE-ProRule" id="PRU00718"/>
    </source>
</evidence>
<evidence type="ECO:0000269" key="5">
    <source>
    </source>
</evidence>
<evidence type="ECO:0000305" key="6"/>
<protein>
    <recommendedName>
        <fullName>Cannabidiolic acid synthase-like 1</fullName>
    </recommendedName>
</protein>
<keyword id="KW-1015">Disulfide bond</keyword>
<keyword id="KW-0274">FAD</keyword>
<keyword id="KW-0285">Flavoprotein</keyword>
<keyword id="KW-0325">Glycoprotein</keyword>
<keyword id="KW-0964">Secreted</keyword>
<keyword id="KW-0732">Signal</keyword>
<organism>
    <name type="scientific">Cannabis sativa</name>
    <name type="common">Hemp</name>
    <name type="synonym">Marijuana</name>
    <dbReference type="NCBI Taxonomy" id="3483"/>
    <lineage>
        <taxon>Eukaryota</taxon>
        <taxon>Viridiplantae</taxon>
        <taxon>Streptophyta</taxon>
        <taxon>Embryophyta</taxon>
        <taxon>Tracheophyta</taxon>
        <taxon>Spermatophyta</taxon>
        <taxon>Magnoliopsida</taxon>
        <taxon>eudicotyledons</taxon>
        <taxon>Gunneridae</taxon>
        <taxon>Pentapetalae</taxon>
        <taxon>rosids</taxon>
        <taxon>fabids</taxon>
        <taxon>Rosales</taxon>
        <taxon>Cannabaceae</taxon>
        <taxon>Cannabis</taxon>
    </lineage>
</organism>
<reference key="1">
    <citation type="journal article" date="2007" name="FEBS Lett.">
        <title>Cannabidiolic-acid synthase, the chemotype-determining enzyme in the fiber-type Cannabis sativa.</title>
        <authorList>
            <person name="Taura F."/>
            <person name="Sirikantaramas S."/>
            <person name="Shoyama Y."/>
            <person name="Yoshikai K."/>
            <person name="Shoyama Y."/>
            <person name="Morimoto S."/>
        </authorList>
    </citation>
    <scope>NUCLEOTIDE SEQUENCE [MRNA]</scope>
    <scope>FUNCTION</scope>
</reference>
<sequence>MKCSTFCFWYVCKIIFFFLSFNIQISIANPQENFLKCFSQYIPTNVTNAKLVYTQHDQFYMSILNSTIQNLRFTSDTTPKPLVIITPLNVSHIQGTILCSKKVGLQIRTRSGGHDAEGMSYISQVPFVIVDLRNMHSVKIDVHSQTAWVEAGATLGEVYYWINENNENLSFPAGYCPTVGAGGHFSGGGYGALMRNYGLAADNIIDAHLVNVDGKVLDRKSMGEDLFWAIRGGGGENFGIIAAWKIRLVAVPSMSTIFSVKKNMEIHELVKLVNKWQNIAYMYEKELLLFTHFITRNITDNQGKNKTTIHSYFSSIFHGGVDSLVDLMNKSFPELGIKKTDCKQLSWIDTIIFYSGVVNYNTTYFKKEILLDRSGGRKAAFSIKLDYVKKPIPETAMVTILEKLYEEDVGVGMFVFYPYGGIMDEISESAIPFPHRAGIMYEIWYIASWEKQEDNEKHINWIRNVYNFTTPYVSQNPRMAYLNYRDLDLGKTNFESPNNYTQARIWGEKYFGKNFNRLVKVKTKVDPDNFFRNEQSIPPLPLRHH</sequence>
<accession>A6P6W0</accession>
<comment type="function">
    <text evidence="5">Has no cannabidiolic acid synthase activity.</text>
</comment>
<comment type="cofactor">
    <cofactor evidence="2">
        <name>FAD</name>
        <dbReference type="ChEBI" id="CHEBI:57692"/>
    </cofactor>
    <text evidence="2">Binds 1 FAD per subunit in a bicovalent manner.</text>
</comment>
<comment type="subcellular location">
    <subcellularLocation>
        <location evidence="1">Secreted</location>
    </subcellularLocation>
</comment>
<comment type="PTM">
    <text evidence="2">The FAD cofactor is bound via a bicovalent 6-S-cysteinyl, 8alpha-N1-histidyl FAD linkage.</text>
</comment>
<comment type="similarity">
    <text evidence="6">Belongs to the oxygen-dependent FAD-linked oxidoreductase family.</text>
</comment>
<gene>
    <name type="primary">CBDAS2</name>
</gene>
<feature type="signal peptide" evidence="3">
    <location>
        <begin position="1"/>
        <end position="28"/>
    </location>
</feature>
<feature type="chain" id="PRO_0000421145" description="Cannabidiolic acid synthase-like 1">
    <location>
        <begin position="29"/>
        <end position="545"/>
    </location>
</feature>
<feature type="domain" description="FAD-binding PCMH-type" evidence="4">
    <location>
        <begin position="77"/>
        <end position="251"/>
    </location>
</feature>
<feature type="active site" description="Proton acceptor" evidence="1">
    <location>
        <position position="484"/>
    </location>
</feature>
<feature type="binding site" evidence="1">
    <location>
        <position position="292"/>
    </location>
    <ligand>
        <name>substrate</name>
    </ligand>
</feature>
<feature type="binding site" evidence="1">
    <location>
        <position position="417"/>
    </location>
    <ligand>
        <name>substrate</name>
    </ligand>
</feature>
<feature type="glycosylation site" description="N-linked (GlcNAc...) asparagine" evidence="3">
    <location>
        <position position="45"/>
    </location>
</feature>
<feature type="glycosylation site" description="N-linked (GlcNAc...) asparagine" evidence="3">
    <location>
        <position position="65"/>
    </location>
</feature>
<feature type="glycosylation site" description="N-linked (GlcNAc...) asparagine" evidence="3">
    <location>
        <position position="89"/>
    </location>
</feature>
<feature type="glycosylation site" description="N-linked (GlcNAc...) asparagine" evidence="3">
    <location>
        <position position="168"/>
    </location>
</feature>
<feature type="glycosylation site" description="N-linked (GlcNAc...) asparagine" evidence="3">
    <location>
        <position position="297"/>
    </location>
</feature>
<feature type="glycosylation site" description="N-linked (GlcNAc...) asparagine" evidence="3">
    <location>
        <position position="305"/>
    </location>
</feature>
<feature type="glycosylation site" description="N-linked (GlcNAc...) asparagine" evidence="3">
    <location>
        <position position="329"/>
    </location>
</feature>
<feature type="glycosylation site" description="N-linked (GlcNAc...) asparagine" evidence="3">
    <location>
        <position position="361"/>
    </location>
</feature>
<feature type="glycosylation site" description="N-linked (GlcNAc...) asparagine" evidence="3">
    <location>
        <position position="467"/>
    </location>
</feature>
<feature type="glycosylation site" description="N-linked (GlcNAc...) asparagine" evidence="3">
    <location>
        <position position="499"/>
    </location>
</feature>
<feature type="disulfide bond" evidence="1">
    <location>
        <begin position="37"/>
        <end position="99"/>
    </location>
</feature>
<feature type="cross-link" description="6-(S-cysteinyl)-8alpha-(pros-histidyl)-FAD (His-Cys)" evidence="2">
    <location>
        <begin position="114"/>
        <end position="176"/>
    </location>
</feature>